<reference key="1">
    <citation type="journal article" date="2010" name="Genome Biol. Evol.">
        <title>Continuing evolution of Burkholderia mallei through genome reduction and large-scale rearrangements.</title>
        <authorList>
            <person name="Losada L."/>
            <person name="Ronning C.M."/>
            <person name="DeShazer D."/>
            <person name="Woods D."/>
            <person name="Fedorova N."/>
            <person name="Kim H.S."/>
            <person name="Shabalina S.A."/>
            <person name="Pearson T.R."/>
            <person name="Brinkac L."/>
            <person name="Tan P."/>
            <person name="Nandi T."/>
            <person name="Crabtree J."/>
            <person name="Badger J."/>
            <person name="Beckstrom-Sternberg S."/>
            <person name="Saqib M."/>
            <person name="Schutzer S.E."/>
            <person name="Keim P."/>
            <person name="Nierman W.C."/>
        </authorList>
    </citation>
    <scope>NUCLEOTIDE SEQUENCE [LARGE SCALE GENOMIC DNA]</scope>
    <source>
        <strain>668</strain>
    </source>
</reference>
<organism>
    <name type="scientific">Burkholderia pseudomallei (strain 668)</name>
    <dbReference type="NCBI Taxonomy" id="320373"/>
    <lineage>
        <taxon>Bacteria</taxon>
        <taxon>Pseudomonadati</taxon>
        <taxon>Pseudomonadota</taxon>
        <taxon>Betaproteobacteria</taxon>
        <taxon>Burkholderiales</taxon>
        <taxon>Burkholderiaceae</taxon>
        <taxon>Burkholderia</taxon>
        <taxon>pseudomallei group</taxon>
    </lineage>
</organism>
<comment type="function">
    <text evidence="1">Forms part of the ribosomal stalk which helps the ribosome interact with GTP-bound translation factors. Is thus essential for accurate translation.</text>
</comment>
<comment type="subunit">
    <text evidence="1">Homodimer. Part of the ribosomal stalk of the 50S ribosomal subunit. Forms a multimeric L10(L12)X complex, where L10 forms an elongated spine to which 2 to 4 L12 dimers bind in a sequential fashion. Binds GTP-bound translation factors.</text>
</comment>
<comment type="similarity">
    <text evidence="1">Belongs to the bacterial ribosomal protein bL12 family.</text>
</comment>
<feature type="chain" id="PRO_1000006975" description="Large ribosomal subunit protein bL12">
    <location>
        <begin position="1"/>
        <end position="124"/>
    </location>
</feature>
<evidence type="ECO:0000255" key="1">
    <source>
        <dbReference type="HAMAP-Rule" id="MF_00368"/>
    </source>
</evidence>
<evidence type="ECO:0000305" key="2"/>
<keyword id="KW-0687">Ribonucleoprotein</keyword>
<keyword id="KW-0689">Ribosomal protein</keyword>
<proteinExistence type="inferred from homology"/>
<accession>A3NEI8</accession>
<sequence>MAIAKEDILAAVEGMTVLELNELVKAFEEKFGVSAAAVAVAGPAAGGAAAAAEEKTEFTVVLAEAGSNKVAVIKAVREITGLGLKEAKDLVDGAPKPVKEGVDKASADEAKKKLEDAGAKVELK</sequence>
<dbReference type="EMBL" id="CP000570">
    <property type="protein sequence ID" value="ABN81765.1"/>
    <property type="molecule type" value="Genomic_DNA"/>
</dbReference>
<dbReference type="RefSeq" id="WP_004198366.1">
    <property type="nucleotide sequence ID" value="NC_009074.1"/>
</dbReference>
<dbReference type="SMR" id="A3NEI8"/>
<dbReference type="GeneID" id="93061842"/>
<dbReference type="KEGG" id="bpd:BURPS668_3755"/>
<dbReference type="HOGENOM" id="CLU_086499_3_2_4"/>
<dbReference type="GO" id="GO:0022625">
    <property type="term" value="C:cytosolic large ribosomal subunit"/>
    <property type="evidence" value="ECO:0007669"/>
    <property type="project" value="TreeGrafter"/>
</dbReference>
<dbReference type="GO" id="GO:0003729">
    <property type="term" value="F:mRNA binding"/>
    <property type="evidence" value="ECO:0007669"/>
    <property type="project" value="TreeGrafter"/>
</dbReference>
<dbReference type="GO" id="GO:0003735">
    <property type="term" value="F:structural constituent of ribosome"/>
    <property type="evidence" value="ECO:0007669"/>
    <property type="project" value="InterPro"/>
</dbReference>
<dbReference type="GO" id="GO:0006412">
    <property type="term" value="P:translation"/>
    <property type="evidence" value="ECO:0007669"/>
    <property type="project" value="UniProtKB-UniRule"/>
</dbReference>
<dbReference type="CDD" id="cd00387">
    <property type="entry name" value="Ribosomal_L7_L12"/>
    <property type="match status" value="1"/>
</dbReference>
<dbReference type="FunFam" id="3.30.1390.10:FF:000001">
    <property type="entry name" value="50S ribosomal protein L7/L12"/>
    <property type="match status" value="1"/>
</dbReference>
<dbReference type="Gene3D" id="3.30.1390.10">
    <property type="match status" value="1"/>
</dbReference>
<dbReference type="Gene3D" id="1.20.5.710">
    <property type="entry name" value="Single helix bin"/>
    <property type="match status" value="1"/>
</dbReference>
<dbReference type="HAMAP" id="MF_00368">
    <property type="entry name" value="Ribosomal_bL12"/>
    <property type="match status" value="1"/>
</dbReference>
<dbReference type="InterPro" id="IPR000206">
    <property type="entry name" value="Ribosomal_bL12"/>
</dbReference>
<dbReference type="InterPro" id="IPR013823">
    <property type="entry name" value="Ribosomal_bL12_C"/>
</dbReference>
<dbReference type="InterPro" id="IPR014719">
    <property type="entry name" value="Ribosomal_bL12_C/ClpS-like"/>
</dbReference>
<dbReference type="InterPro" id="IPR008932">
    <property type="entry name" value="Ribosomal_bL12_oligo"/>
</dbReference>
<dbReference type="InterPro" id="IPR036235">
    <property type="entry name" value="Ribosomal_bL12_oligo_N_sf"/>
</dbReference>
<dbReference type="NCBIfam" id="TIGR00855">
    <property type="entry name" value="L12"/>
    <property type="match status" value="1"/>
</dbReference>
<dbReference type="PANTHER" id="PTHR45987">
    <property type="entry name" value="39S RIBOSOMAL PROTEIN L12"/>
    <property type="match status" value="1"/>
</dbReference>
<dbReference type="PANTHER" id="PTHR45987:SF4">
    <property type="entry name" value="LARGE RIBOSOMAL SUBUNIT PROTEIN BL12M"/>
    <property type="match status" value="1"/>
</dbReference>
<dbReference type="Pfam" id="PF00542">
    <property type="entry name" value="Ribosomal_L12"/>
    <property type="match status" value="1"/>
</dbReference>
<dbReference type="Pfam" id="PF16320">
    <property type="entry name" value="Ribosomal_L12_N"/>
    <property type="match status" value="1"/>
</dbReference>
<dbReference type="SUPFAM" id="SSF54736">
    <property type="entry name" value="ClpS-like"/>
    <property type="match status" value="1"/>
</dbReference>
<dbReference type="SUPFAM" id="SSF48300">
    <property type="entry name" value="Ribosomal protein L7/12, oligomerisation (N-terminal) domain"/>
    <property type="match status" value="1"/>
</dbReference>
<gene>
    <name evidence="1" type="primary">rplL</name>
    <name type="ordered locus">BURPS668_3755</name>
</gene>
<name>RL7_BURP6</name>
<protein>
    <recommendedName>
        <fullName evidence="1">Large ribosomal subunit protein bL12</fullName>
    </recommendedName>
    <alternativeName>
        <fullName evidence="2">50S ribosomal protein L7/L12</fullName>
    </alternativeName>
</protein>